<reference key="1">
    <citation type="journal article" date="2000" name="Science">
        <title>The genome sequence of Drosophila melanogaster.</title>
        <authorList>
            <person name="Adams M.D."/>
            <person name="Celniker S.E."/>
            <person name="Holt R.A."/>
            <person name="Evans C.A."/>
            <person name="Gocayne J.D."/>
            <person name="Amanatides P.G."/>
            <person name="Scherer S.E."/>
            <person name="Li P.W."/>
            <person name="Hoskins R.A."/>
            <person name="Galle R.F."/>
            <person name="George R.A."/>
            <person name="Lewis S.E."/>
            <person name="Richards S."/>
            <person name="Ashburner M."/>
            <person name="Henderson S.N."/>
            <person name="Sutton G.G."/>
            <person name="Wortman J.R."/>
            <person name="Yandell M.D."/>
            <person name="Zhang Q."/>
            <person name="Chen L.X."/>
            <person name="Brandon R.C."/>
            <person name="Rogers Y.-H.C."/>
            <person name="Blazej R.G."/>
            <person name="Champe M."/>
            <person name="Pfeiffer B.D."/>
            <person name="Wan K.H."/>
            <person name="Doyle C."/>
            <person name="Baxter E.G."/>
            <person name="Helt G."/>
            <person name="Nelson C.R."/>
            <person name="Miklos G.L.G."/>
            <person name="Abril J.F."/>
            <person name="Agbayani A."/>
            <person name="An H.-J."/>
            <person name="Andrews-Pfannkoch C."/>
            <person name="Baldwin D."/>
            <person name="Ballew R.M."/>
            <person name="Basu A."/>
            <person name="Baxendale J."/>
            <person name="Bayraktaroglu L."/>
            <person name="Beasley E.M."/>
            <person name="Beeson K.Y."/>
            <person name="Benos P.V."/>
            <person name="Berman B.P."/>
            <person name="Bhandari D."/>
            <person name="Bolshakov S."/>
            <person name="Borkova D."/>
            <person name="Botchan M.R."/>
            <person name="Bouck J."/>
            <person name="Brokstein P."/>
            <person name="Brottier P."/>
            <person name="Burtis K.C."/>
            <person name="Busam D.A."/>
            <person name="Butler H."/>
            <person name="Cadieu E."/>
            <person name="Center A."/>
            <person name="Chandra I."/>
            <person name="Cherry J.M."/>
            <person name="Cawley S."/>
            <person name="Dahlke C."/>
            <person name="Davenport L.B."/>
            <person name="Davies P."/>
            <person name="de Pablos B."/>
            <person name="Delcher A."/>
            <person name="Deng Z."/>
            <person name="Mays A.D."/>
            <person name="Dew I."/>
            <person name="Dietz S.M."/>
            <person name="Dodson K."/>
            <person name="Doup L.E."/>
            <person name="Downes M."/>
            <person name="Dugan-Rocha S."/>
            <person name="Dunkov B.C."/>
            <person name="Dunn P."/>
            <person name="Durbin K.J."/>
            <person name="Evangelista C.C."/>
            <person name="Ferraz C."/>
            <person name="Ferriera S."/>
            <person name="Fleischmann W."/>
            <person name="Fosler C."/>
            <person name="Gabrielian A.E."/>
            <person name="Garg N.S."/>
            <person name="Gelbart W.M."/>
            <person name="Glasser K."/>
            <person name="Glodek A."/>
            <person name="Gong F."/>
            <person name="Gorrell J.H."/>
            <person name="Gu Z."/>
            <person name="Guan P."/>
            <person name="Harris M."/>
            <person name="Harris N.L."/>
            <person name="Harvey D.A."/>
            <person name="Heiman T.J."/>
            <person name="Hernandez J.R."/>
            <person name="Houck J."/>
            <person name="Hostin D."/>
            <person name="Houston K.A."/>
            <person name="Howland T.J."/>
            <person name="Wei M.-H."/>
            <person name="Ibegwam C."/>
            <person name="Jalali M."/>
            <person name="Kalush F."/>
            <person name="Karpen G.H."/>
            <person name="Ke Z."/>
            <person name="Kennison J.A."/>
            <person name="Ketchum K.A."/>
            <person name="Kimmel B.E."/>
            <person name="Kodira C.D."/>
            <person name="Kraft C.L."/>
            <person name="Kravitz S."/>
            <person name="Kulp D."/>
            <person name="Lai Z."/>
            <person name="Lasko P."/>
            <person name="Lei Y."/>
            <person name="Levitsky A.A."/>
            <person name="Li J.H."/>
            <person name="Li Z."/>
            <person name="Liang Y."/>
            <person name="Lin X."/>
            <person name="Liu X."/>
            <person name="Mattei B."/>
            <person name="McIntosh T.C."/>
            <person name="McLeod M.P."/>
            <person name="McPherson D."/>
            <person name="Merkulov G."/>
            <person name="Milshina N.V."/>
            <person name="Mobarry C."/>
            <person name="Morris J."/>
            <person name="Moshrefi A."/>
            <person name="Mount S.M."/>
            <person name="Moy M."/>
            <person name="Murphy B."/>
            <person name="Murphy L."/>
            <person name="Muzny D.M."/>
            <person name="Nelson D.L."/>
            <person name="Nelson D.R."/>
            <person name="Nelson K.A."/>
            <person name="Nixon K."/>
            <person name="Nusskern D.R."/>
            <person name="Pacleb J.M."/>
            <person name="Palazzolo M."/>
            <person name="Pittman G.S."/>
            <person name="Pan S."/>
            <person name="Pollard J."/>
            <person name="Puri V."/>
            <person name="Reese M.G."/>
            <person name="Reinert K."/>
            <person name="Remington K."/>
            <person name="Saunders R.D.C."/>
            <person name="Scheeler F."/>
            <person name="Shen H."/>
            <person name="Shue B.C."/>
            <person name="Siden-Kiamos I."/>
            <person name="Simpson M."/>
            <person name="Skupski M.P."/>
            <person name="Smith T.J."/>
            <person name="Spier E."/>
            <person name="Spradling A.C."/>
            <person name="Stapleton M."/>
            <person name="Strong R."/>
            <person name="Sun E."/>
            <person name="Svirskas R."/>
            <person name="Tector C."/>
            <person name="Turner R."/>
            <person name="Venter E."/>
            <person name="Wang A.H."/>
            <person name="Wang X."/>
            <person name="Wang Z.-Y."/>
            <person name="Wassarman D.A."/>
            <person name="Weinstock G.M."/>
            <person name="Weissenbach J."/>
            <person name="Williams S.M."/>
            <person name="Woodage T."/>
            <person name="Worley K.C."/>
            <person name="Wu D."/>
            <person name="Yang S."/>
            <person name="Yao Q.A."/>
            <person name="Ye J."/>
            <person name="Yeh R.-F."/>
            <person name="Zaveri J.S."/>
            <person name="Zhan M."/>
            <person name="Zhang G."/>
            <person name="Zhao Q."/>
            <person name="Zheng L."/>
            <person name="Zheng X.H."/>
            <person name="Zhong F.N."/>
            <person name="Zhong W."/>
            <person name="Zhou X."/>
            <person name="Zhu S.C."/>
            <person name="Zhu X."/>
            <person name="Smith H.O."/>
            <person name="Gibbs R.A."/>
            <person name="Myers E.W."/>
            <person name="Rubin G.M."/>
            <person name="Venter J.C."/>
        </authorList>
    </citation>
    <scope>NUCLEOTIDE SEQUENCE [LARGE SCALE GENOMIC DNA]</scope>
    <source>
        <strain>Berkeley</strain>
    </source>
</reference>
<reference key="2">
    <citation type="journal article" date="2002" name="Genome Biol.">
        <title>Annotation of the Drosophila melanogaster euchromatic genome: a systematic review.</title>
        <authorList>
            <person name="Misra S."/>
            <person name="Crosby M.A."/>
            <person name="Mungall C.J."/>
            <person name="Matthews B.B."/>
            <person name="Campbell K.S."/>
            <person name="Hradecky P."/>
            <person name="Huang Y."/>
            <person name="Kaminker J.S."/>
            <person name="Millburn G.H."/>
            <person name="Prochnik S.E."/>
            <person name="Smith C.D."/>
            <person name="Tupy J.L."/>
            <person name="Whitfield E.J."/>
            <person name="Bayraktaroglu L."/>
            <person name="Berman B.P."/>
            <person name="Bettencourt B.R."/>
            <person name="Celniker S.E."/>
            <person name="de Grey A.D.N.J."/>
            <person name="Drysdale R.A."/>
            <person name="Harris N.L."/>
            <person name="Richter J."/>
            <person name="Russo S."/>
            <person name="Schroeder A.J."/>
            <person name="Shu S.Q."/>
            <person name="Stapleton M."/>
            <person name="Yamada C."/>
            <person name="Ashburner M."/>
            <person name="Gelbart W.M."/>
            <person name="Rubin G.M."/>
            <person name="Lewis S.E."/>
        </authorList>
    </citation>
    <scope>GENOME REANNOTATION</scope>
    <source>
        <strain>Berkeley</strain>
    </source>
</reference>
<reference key="3">
    <citation type="journal article" date="2009" name="Mol. Cell. Biol.">
        <title>Conservation of the protein composition and electron microscopy structure of Drosophila melanogaster and human spliceosomal complexes.</title>
        <authorList>
            <person name="Herold N."/>
            <person name="Will C.L."/>
            <person name="Wolf E."/>
            <person name="Kastner B."/>
            <person name="Urlaub H."/>
            <person name="Luhrmann R."/>
        </authorList>
    </citation>
    <scope>IDENTIFICATION BY MASS SPECTROMETRY</scope>
    <scope>FUNCTION</scope>
    <scope>IDENTIFICATION IN THE SF3B COMPLEX</scope>
    <scope>SUBCELLULAR LOCATION</scope>
    <scope>ELECTRON MICROSCOPY OF THE SF3B COMPLEX</scope>
</reference>
<reference key="4">
    <citation type="journal article" date="2016" name="J. Mol. Biol.">
        <title>The Spliceosomal Protein SF3B5 is a Novel Component of Drosophila SAGA that Functions in Gene Expression Independent of Splicing.</title>
        <authorList>
            <person name="Stegeman R."/>
            <person name="Spreacker P.J."/>
            <person name="Swanson S.K."/>
            <person name="Stephenson R."/>
            <person name="Florens L."/>
            <person name="Washburn M.P."/>
            <person name="Weake V.M."/>
        </authorList>
    </citation>
    <scope>IDENTIFICATION BY MASS SPECTROMETRY</scope>
    <scope>FUNCTION</scope>
    <scope>IDENTIFICATION IN THE SAGA COMPLEX</scope>
    <scope>SUBCELLULAR LOCATION</scope>
    <scope>DISRUPTION PHENOTYPE</scope>
</reference>
<reference key="5">
    <citation type="journal article" date="2016" name="Proc. Natl. Acad. Sci. U.S.A.">
        <title>Major spliceosome defects cause male infertility and are associated with nonobstructive azoospermia in humans.</title>
        <authorList>
            <person name="Wu H."/>
            <person name="Sun L."/>
            <person name="Wen Y."/>
            <person name="Liu Y."/>
            <person name="Yu J."/>
            <person name="Mao F."/>
            <person name="Wang Y."/>
            <person name="Tong C."/>
            <person name="Guo X."/>
            <person name="Hu Z."/>
            <person name="Sha J."/>
            <person name="Liu M."/>
            <person name="Xia L."/>
        </authorList>
    </citation>
    <scope>FUNCTION</scope>
    <scope>DISRUPTION PHENOTYPE</scope>
</reference>
<dbReference type="EMBL" id="AE014297">
    <property type="protein sequence ID" value="AAF54327.1"/>
    <property type="molecule type" value="Genomic_DNA"/>
</dbReference>
<dbReference type="RefSeq" id="NP_652189.1">
    <property type="nucleotide sequence ID" value="NM_143932.3"/>
</dbReference>
<dbReference type="SMR" id="Q9VHI4"/>
<dbReference type="BioGRID" id="72500">
    <property type="interactions" value="45"/>
</dbReference>
<dbReference type="ComplexPortal" id="CPX-2644">
    <property type="entry name" value="SAGA complex"/>
</dbReference>
<dbReference type="DIP" id="DIP-20303N"/>
<dbReference type="FunCoup" id="Q9VHI4">
    <property type="interactions" value="626"/>
</dbReference>
<dbReference type="IntAct" id="Q9VHI4">
    <property type="interactions" value="7"/>
</dbReference>
<dbReference type="STRING" id="7227.FBpp0081484"/>
<dbReference type="PaxDb" id="7227-FBpp0081484"/>
<dbReference type="DNASU" id="50007"/>
<dbReference type="EnsemblMetazoa" id="FBtr0082006">
    <property type="protein sequence ID" value="FBpp0081484"/>
    <property type="gene ID" value="FBgn0040534"/>
</dbReference>
<dbReference type="GeneID" id="50007"/>
<dbReference type="KEGG" id="dme:Dmel_CG11985"/>
<dbReference type="UCSC" id="CG11985-RA">
    <property type="organism name" value="d. melanogaster"/>
</dbReference>
<dbReference type="AGR" id="FB:FBgn0040534"/>
<dbReference type="CTD" id="83443"/>
<dbReference type="FlyBase" id="FBgn0040534">
    <property type="gene designation" value="Sf3b5"/>
</dbReference>
<dbReference type="VEuPathDB" id="VectorBase:FBgn0040534"/>
<dbReference type="eggNOG" id="KOG3485">
    <property type="taxonomic scope" value="Eukaryota"/>
</dbReference>
<dbReference type="GeneTree" id="ENSGT00390000013215"/>
<dbReference type="HOGENOM" id="CLU_138804_3_1_1"/>
<dbReference type="InParanoid" id="Q9VHI4"/>
<dbReference type="OMA" id="YDRFNIH"/>
<dbReference type="OrthoDB" id="274726at2759"/>
<dbReference type="PhylomeDB" id="Q9VHI4"/>
<dbReference type="Reactome" id="R-DME-72165">
    <property type="pathway name" value="mRNA Splicing - Minor Pathway"/>
</dbReference>
<dbReference type="BioGRID-ORCS" id="50007">
    <property type="hits" value="0 hits in 1 CRISPR screen"/>
</dbReference>
<dbReference type="GenomeRNAi" id="50007"/>
<dbReference type="PRO" id="PR:Q9VHI4"/>
<dbReference type="Proteomes" id="UP000000803">
    <property type="component" value="Chromosome 3R"/>
</dbReference>
<dbReference type="Bgee" id="FBgn0040534">
    <property type="expression patterns" value="Expressed in imaginal disc and 138 other cell types or tissues"/>
</dbReference>
<dbReference type="ExpressionAtlas" id="Q9VHI4">
    <property type="expression patterns" value="baseline and differential"/>
</dbReference>
<dbReference type="GO" id="GO:0071011">
    <property type="term" value="C:precatalytic spliceosome"/>
    <property type="evidence" value="ECO:0007005"/>
    <property type="project" value="FlyBase"/>
</dbReference>
<dbReference type="GO" id="GO:0000124">
    <property type="term" value="C:SAGA complex"/>
    <property type="evidence" value="ECO:0000314"/>
    <property type="project" value="UniProtKB"/>
</dbReference>
<dbReference type="GO" id="GO:0005686">
    <property type="term" value="C:U2 snRNP"/>
    <property type="evidence" value="ECO:0000314"/>
    <property type="project" value="UniProtKB"/>
</dbReference>
<dbReference type="GO" id="GO:0000398">
    <property type="term" value="P:mRNA splicing, via spliceosome"/>
    <property type="evidence" value="ECO:0000318"/>
    <property type="project" value="GO_Central"/>
</dbReference>
<dbReference type="GO" id="GO:0010468">
    <property type="term" value="P:regulation of gene expression"/>
    <property type="evidence" value="ECO:0000315"/>
    <property type="project" value="UniProtKB"/>
</dbReference>
<dbReference type="GO" id="GO:0007283">
    <property type="term" value="P:spermatogenesis"/>
    <property type="evidence" value="ECO:0000315"/>
    <property type="project" value="FlyBase"/>
</dbReference>
<dbReference type="InterPro" id="IPR009846">
    <property type="entry name" value="SF3b5/RDS3-10"/>
</dbReference>
<dbReference type="InterPro" id="IPR017089">
    <property type="entry name" value="Splicing_factor_3B_subunit_5"/>
</dbReference>
<dbReference type="PANTHER" id="PTHR20978">
    <property type="entry name" value="SPLICING FACTOR 3B SUBUNIT 5"/>
    <property type="match status" value="1"/>
</dbReference>
<dbReference type="PANTHER" id="PTHR20978:SF0">
    <property type="entry name" value="SPLICING FACTOR 3B SUBUNIT 5"/>
    <property type="match status" value="1"/>
</dbReference>
<dbReference type="Pfam" id="PF07189">
    <property type="entry name" value="SF3b10"/>
    <property type="match status" value="1"/>
</dbReference>
<dbReference type="PIRSF" id="PIRSF037010">
    <property type="entry name" value="Splicing_factor_3B_subunit_5"/>
    <property type="match status" value="1"/>
</dbReference>
<feature type="chain" id="PRO_0000220759" description="Splicing factor 3B subunit 5">
    <location>
        <begin position="1"/>
        <end position="85"/>
    </location>
</feature>
<sequence>MGERYNIHSQLEHLQSKYIGTGHADTTKFEWLTNQHRDSLASYMGHYDILNYFAIAENESKARVRFNLMERMLQPCGPPPEKLED</sequence>
<protein>
    <recommendedName>
        <fullName evidence="6">Splicing factor 3B subunit 5</fullName>
    </recommendedName>
    <alternativeName>
        <fullName>Pre-mRNA-splicing factor SF3b 10 kDa subunit</fullName>
    </alternativeName>
</protein>
<organism>
    <name type="scientific">Drosophila melanogaster</name>
    <name type="common">Fruit fly</name>
    <dbReference type="NCBI Taxonomy" id="7227"/>
    <lineage>
        <taxon>Eukaryota</taxon>
        <taxon>Metazoa</taxon>
        <taxon>Ecdysozoa</taxon>
        <taxon>Arthropoda</taxon>
        <taxon>Hexapoda</taxon>
        <taxon>Insecta</taxon>
        <taxon>Pterygota</taxon>
        <taxon>Neoptera</taxon>
        <taxon>Endopterygota</taxon>
        <taxon>Diptera</taxon>
        <taxon>Brachycera</taxon>
        <taxon>Muscomorpha</taxon>
        <taxon>Ephydroidea</taxon>
        <taxon>Drosophilidae</taxon>
        <taxon>Drosophila</taxon>
        <taxon>Sophophora</taxon>
    </lineage>
</organism>
<name>SF3B5_DROME</name>
<gene>
    <name evidence="6" type="primary">Sf3b5</name>
    <name evidence="6" type="ORF">CG11985</name>
</gene>
<accession>Q9VHI4</accession>
<comment type="function">
    <text evidence="2 3 5">Involved in pre-mRNA splicing as component of spliceosome (PubMed:18981222, PubMed:27185460). As part of the spliceosome complex, plays a role in the regulation of spermatogonial differentiation (PubMed:27035939). When associated with the SAGA transcription regulatory histone acetylation (HAT) complex, might be involved in the transcriptional activation of a subset of SAGA-regulated genes (PubMed:27185460).</text>
</comment>
<comment type="subunit">
    <text evidence="1 3">Component of the SF3B complex (PubMed:18981222, PubMed:27185460). SF3B complex associates with the splicing factor SF3A complex and a 12S RNA unit to form the U2 small nuclear ribonucleoproteins complex (U2 snRNP) (PubMed:18981222, PubMed:27185460). Identified in the SAGA transcription regulatory histone acetylation (HAT) complex; the interaction is RNA-independent (PubMed:27185460).</text>
</comment>
<comment type="subcellular location">
    <subcellularLocation>
        <location evidence="1 3">Nucleus</location>
    </subcellularLocation>
</comment>
<comment type="disruption phenotype">
    <text evidence="2 3">Lethal at the first instar larval stage (PubMed:27185460). RNAi-mediated knockdown in germ cells results in male sterility (PubMed:27035939).</text>
</comment>
<comment type="similarity">
    <text evidence="4">Belongs to the SF3B5 family.</text>
</comment>
<evidence type="ECO:0000269" key="1">
    <source>
    </source>
</evidence>
<evidence type="ECO:0000269" key="2">
    <source>
    </source>
</evidence>
<evidence type="ECO:0000269" key="3">
    <source>
    </source>
</evidence>
<evidence type="ECO:0000305" key="4"/>
<evidence type="ECO:0000305" key="5">
    <source>
    </source>
</evidence>
<evidence type="ECO:0000312" key="6">
    <source>
        <dbReference type="FlyBase" id="FBgn0040534"/>
    </source>
</evidence>
<keyword id="KW-0507">mRNA processing</keyword>
<keyword id="KW-0508">mRNA splicing</keyword>
<keyword id="KW-0539">Nucleus</keyword>
<keyword id="KW-1185">Reference proteome</keyword>
<keyword id="KW-0747">Spliceosome</keyword>
<proteinExistence type="evidence at protein level"/>